<comment type="function">
    <text evidence="1">Di-iron-containing protein involved in the repair of iron-sulfur clusters damaged by oxidative and nitrosative stress conditions.</text>
</comment>
<comment type="subunit">
    <text evidence="1">Homodimer.</text>
</comment>
<comment type="subcellular location">
    <subcellularLocation>
        <location evidence="1">Cytoplasm</location>
    </subcellularLocation>
</comment>
<comment type="induction">
    <text evidence="2">Induced by nitric oxide.</text>
</comment>
<comment type="similarity">
    <text evidence="1">Belongs to the RIC family. ScdA subfamily.</text>
</comment>
<feature type="chain" id="PRO_0000220335" description="Iron-sulfur cluster repair protein ScdA">
    <location>
        <begin position="1"/>
        <end position="224"/>
    </location>
</feature>
<name>SCDA_STAAC</name>
<reference key="1">
    <citation type="journal article" date="2005" name="J. Bacteriol.">
        <title>Insights on evolution of virulence and resistance from the complete genome analysis of an early methicillin-resistant Staphylococcus aureus strain and a biofilm-producing methicillin-resistant Staphylococcus epidermidis strain.</title>
        <authorList>
            <person name="Gill S.R."/>
            <person name="Fouts D.E."/>
            <person name="Archer G.L."/>
            <person name="Mongodin E.F."/>
            <person name="DeBoy R.T."/>
            <person name="Ravel J."/>
            <person name="Paulsen I.T."/>
            <person name="Kolonay J.F."/>
            <person name="Brinkac L.M."/>
            <person name="Beanan M.J."/>
            <person name="Dodson R.J."/>
            <person name="Daugherty S.C."/>
            <person name="Madupu R."/>
            <person name="Angiuoli S.V."/>
            <person name="Durkin A.S."/>
            <person name="Haft D.H."/>
            <person name="Vamathevan J.J."/>
            <person name="Khouri H."/>
            <person name="Utterback T.R."/>
            <person name="Lee C."/>
            <person name="Dimitrov G."/>
            <person name="Jiang L."/>
            <person name="Qin H."/>
            <person name="Weidman J."/>
            <person name="Tran K."/>
            <person name="Kang K.H."/>
            <person name="Hance I.R."/>
            <person name="Nelson K.E."/>
            <person name="Fraser C.M."/>
        </authorList>
    </citation>
    <scope>NUCLEOTIDE SEQUENCE [LARGE SCALE GENOMIC DNA]</scope>
    <source>
        <strain>COL</strain>
    </source>
</reference>
<reference key="2">
    <citation type="journal article" date="2006" name="Mol. Microbiol.">
        <title>The nitrosative stress response of Staphylococcus aureus is required for resistance to innate immunity.</title>
        <authorList>
            <person name="Richardson A.R."/>
            <person name="Dunman P.M."/>
            <person name="Fang F.C."/>
        </authorList>
    </citation>
    <scope>INDUCTION</scope>
    <source>
        <strain>COL</strain>
    </source>
</reference>
<gene>
    <name evidence="1" type="primary">scdA</name>
    <name type="ordered locus">SACOL0244</name>
</gene>
<accession>Q5HJB7</accession>
<sequence length="224" mass="25485">MINKNDIVADVVTDYPKAADIFRSVGIDFCCGGQVSIEAAALEKKNVDLNELLQRLNDVEQTNTPGSLNPKFLNVSSLIQYIQSAYHEPLREEFKNLTPYVTKLSKVHGPNHPYLVELKETYDTFKNGMLEHMQKEDDVDFPKLIKYEQGEVVDDINTVIDDLVSDHIATGELLVKMSELTSSYEPPIEACGTWRLVYQRLKALEVLTHEHVHLENHVLFKKVS</sequence>
<evidence type="ECO:0000255" key="1">
    <source>
        <dbReference type="HAMAP-Rule" id="MF_01156"/>
    </source>
</evidence>
<evidence type="ECO:0000269" key="2">
    <source>
    </source>
</evidence>
<dbReference type="EMBL" id="CP000046">
    <property type="protein sequence ID" value="AAW38799.1"/>
    <property type="molecule type" value="Genomic_DNA"/>
</dbReference>
<dbReference type="RefSeq" id="WP_000608826.1">
    <property type="nucleotide sequence ID" value="NZ_JBGOFO010000001.1"/>
</dbReference>
<dbReference type="SMR" id="Q5HJB7"/>
<dbReference type="KEGG" id="sac:SACOL0244"/>
<dbReference type="HOGENOM" id="CLU_076075_0_1_9"/>
<dbReference type="Proteomes" id="UP000000530">
    <property type="component" value="Chromosome"/>
</dbReference>
<dbReference type="GO" id="GO:0005737">
    <property type="term" value="C:cytoplasm"/>
    <property type="evidence" value="ECO:0007669"/>
    <property type="project" value="UniProtKB-SubCell"/>
</dbReference>
<dbReference type="GO" id="GO:0046872">
    <property type="term" value="F:metal ion binding"/>
    <property type="evidence" value="ECO:0007669"/>
    <property type="project" value="UniProtKB-KW"/>
</dbReference>
<dbReference type="GO" id="GO:0030091">
    <property type="term" value="P:protein repair"/>
    <property type="evidence" value="ECO:0007669"/>
    <property type="project" value="UniProtKB-UniRule"/>
</dbReference>
<dbReference type="GO" id="GO:0051409">
    <property type="term" value="P:response to nitrosative stress"/>
    <property type="evidence" value="ECO:0007669"/>
    <property type="project" value="UniProtKB-UniRule"/>
</dbReference>
<dbReference type="GO" id="GO:0006979">
    <property type="term" value="P:response to oxidative stress"/>
    <property type="evidence" value="ECO:0007669"/>
    <property type="project" value="UniProtKB-UniRule"/>
</dbReference>
<dbReference type="FunFam" id="1.20.120.520:FF:000003">
    <property type="entry name" value="Iron-sulfur cluster repair protein ScdA"/>
    <property type="match status" value="1"/>
</dbReference>
<dbReference type="Gene3D" id="1.20.120.520">
    <property type="entry name" value="nmb1532 protein domain like"/>
    <property type="match status" value="1"/>
</dbReference>
<dbReference type="Gene3D" id="1.10.3910.10">
    <property type="entry name" value="SP0561-like"/>
    <property type="match status" value="1"/>
</dbReference>
<dbReference type="HAMAP" id="MF_01156">
    <property type="entry name" value="RIC_ScdA"/>
    <property type="match status" value="1"/>
</dbReference>
<dbReference type="InterPro" id="IPR012312">
    <property type="entry name" value="Hemerythrin-like"/>
</dbReference>
<dbReference type="InterPro" id="IPR019903">
    <property type="entry name" value="RIC_family"/>
</dbReference>
<dbReference type="InterPro" id="IPR023551">
    <property type="entry name" value="ScdA"/>
</dbReference>
<dbReference type="InterPro" id="IPR038062">
    <property type="entry name" value="ScdA-like_N_sf"/>
</dbReference>
<dbReference type="NCBIfam" id="TIGR03652">
    <property type="entry name" value="FeS_repair_RIC"/>
    <property type="match status" value="1"/>
</dbReference>
<dbReference type="NCBIfam" id="NF009777">
    <property type="entry name" value="PRK13276.1"/>
    <property type="match status" value="1"/>
</dbReference>
<dbReference type="PANTHER" id="PTHR36438">
    <property type="entry name" value="IRON-SULFUR CLUSTER REPAIR PROTEIN YTFE"/>
    <property type="match status" value="1"/>
</dbReference>
<dbReference type="PANTHER" id="PTHR36438:SF1">
    <property type="entry name" value="IRON-SULFUR CLUSTER REPAIR PROTEIN YTFE"/>
    <property type="match status" value="1"/>
</dbReference>
<dbReference type="Pfam" id="PF01814">
    <property type="entry name" value="Hemerythrin"/>
    <property type="match status" value="1"/>
</dbReference>
<dbReference type="Pfam" id="PF04405">
    <property type="entry name" value="ScdA_N"/>
    <property type="match status" value="1"/>
</dbReference>
<dbReference type="SUPFAM" id="SSF140683">
    <property type="entry name" value="SP0561-like"/>
    <property type="match status" value="1"/>
</dbReference>
<organism>
    <name type="scientific">Staphylococcus aureus (strain COL)</name>
    <dbReference type="NCBI Taxonomy" id="93062"/>
    <lineage>
        <taxon>Bacteria</taxon>
        <taxon>Bacillati</taxon>
        <taxon>Bacillota</taxon>
        <taxon>Bacilli</taxon>
        <taxon>Bacillales</taxon>
        <taxon>Staphylococcaceae</taxon>
        <taxon>Staphylococcus</taxon>
    </lineage>
</organism>
<proteinExistence type="evidence at transcript level"/>
<keyword id="KW-0963">Cytoplasm</keyword>
<keyword id="KW-0408">Iron</keyword>
<keyword id="KW-0479">Metal-binding</keyword>
<keyword id="KW-0346">Stress response</keyword>
<protein>
    <recommendedName>
        <fullName evidence="1">Iron-sulfur cluster repair protein ScdA</fullName>
    </recommendedName>
</protein>